<gene>
    <name evidence="1" type="primary">rpmJ</name>
    <name type="ordered locus">HP_1297</name>
</gene>
<sequence length="37" mass="4307">MKVRPSVKKMCDNCKIIKRRGVIRVICATPKHKQRQG</sequence>
<keyword id="KW-1185">Reference proteome</keyword>
<keyword id="KW-0687">Ribonucleoprotein</keyword>
<keyword id="KW-0689">Ribosomal protein</keyword>
<reference key="1">
    <citation type="journal article" date="1997" name="Nature">
        <title>The complete genome sequence of the gastric pathogen Helicobacter pylori.</title>
        <authorList>
            <person name="Tomb J.-F."/>
            <person name="White O."/>
            <person name="Kerlavage A.R."/>
            <person name="Clayton R.A."/>
            <person name="Sutton G.G."/>
            <person name="Fleischmann R.D."/>
            <person name="Ketchum K.A."/>
            <person name="Klenk H.-P."/>
            <person name="Gill S.R."/>
            <person name="Dougherty B.A."/>
            <person name="Nelson K.E."/>
            <person name="Quackenbush J."/>
            <person name="Zhou L."/>
            <person name="Kirkness E.F."/>
            <person name="Peterson S.N."/>
            <person name="Loftus B.J."/>
            <person name="Richardson D.L."/>
            <person name="Dodson R.J."/>
            <person name="Khalak H.G."/>
            <person name="Glodek A."/>
            <person name="McKenney K."/>
            <person name="FitzGerald L.M."/>
            <person name="Lee N."/>
            <person name="Adams M.D."/>
            <person name="Hickey E.K."/>
            <person name="Berg D.E."/>
            <person name="Gocayne J.D."/>
            <person name="Utterback T.R."/>
            <person name="Peterson J.D."/>
            <person name="Kelley J.M."/>
            <person name="Cotton M.D."/>
            <person name="Weidman J.F."/>
            <person name="Fujii C."/>
            <person name="Bowman C."/>
            <person name="Watthey L."/>
            <person name="Wallin E."/>
            <person name="Hayes W.S."/>
            <person name="Borodovsky M."/>
            <person name="Karp P.D."/>
            <person name="Smith H.O."/>
            <person name="Fraser C.M."/>
            <person name="Venter J.C."/>
        </authorList>
    </citation>
    <scope>NUCLEOTIDE SEQUENCE [LARGE SCALE GENOMIC DNA]</scope>
    <source>
        <strain>ATCC 700392 / 26695</strain>
    </source>
</reference>
<accession>P56058</accession>
<comment type="similarity">
    <text evidence="1">Belongs to the bacterial ribosomal protein bL36 family.</text>
</comment>
<proteinExistence type="inferred from homology"/>
<dbReference type="EMBL" id="AE000511">
    <property type="protein sequence ID" value="AAD08363.1"/>
    <property type="molecule type" value="Genomic_DNA"/>
</dbReference>
<dbReference type="PIR" id="A64682">
    <property type="entry name" value="A64682"/>
</dbReference>
<dbReference type="RefSeq" id="NP_208089.1">
    <property type="nucleotide sequence ID" value="NC_000915.1"/>
</dbReference>
<dbReference type="SMR" id="P56058"/>
<dbReference type="FunCoup" id="P56058">
    <property type="interactions" value="184"/>
</dbReference>
<dbReference type="STRING" id="85962.HP_1297"/>
<dbReference type="PaxDb" id="85962-C694_06700"/>
<dbReference type="EnsemblBacteria" id="AAD08363">
    <property type="protein sequence ID" value="AAD08363"/>
    <property type="gene ID" value="HP_1297"/>
</dbReference>
<dbReference type="KEGG" id="hpy:HP_1297"/>
<dbReference type="eggNOG" id="COG0257">
    <property type="taxonomic scope" value="Bacteria"/>
</dbReference>
<dbReference type="InParanoid" id="P56058"/>
<dbReference type="PhylomeDB" id="P56058"/>
<dbReference type="Proteomes" id="UP000000429">
    <property type="component" value="Chromosome"/>
</dbReference>
<dbReference type="GO" id="GO:0005737">
    <property type="term" value="C:cytoplasm"/>
    <property type="evidence" value="ECO:0007669"/>
    <property type="project" value="UniProtKB-ARBA"/>
</dbReference>
<dbReference type="GO" id="GO:1990904">
    <property type="term" value="C:ribonucleoprotein complex"/>
    <property type="evidence" value="ECO:0007669"/>
    <property type="project" value="UniProtKB-KW"/>
</dbReference>
<dbReference type="GO" id="GO:0005840">
    <property type="term" value="C:ribosome"/>
    <property type="evidence" value="ECO:0007669"/>
    <property type="project" value="UniProtKB-KW"/>
</dbReference>
<dbReference type="GO" id="GO:0003735">
    <property type="term" value="F:structural constituent of ribosome"/>
    <property type="evidence" value="ECO:0007669"/>
    <property type="project" value="InterPro"/>
</dbReference>
<dbReference type="GO" id="GO:0006412">
    <property type="term" value="P:translation"/>
    <property type="evidence" value="ECO:0007669"/>
    <property type="project" value="UniProtKB-UniRule"/>
</dbReference>
<dbReference type="HAMAP" id="MF_00251">
    <property type="entry name" value="Ribosomal_bL36"/>
    <property type="match status" value="1"/>
</dbReference>
<dbReference type="InterPro" id="IPR000473">
    <property type="entry name" value="Ribosomal_bL36"/>
</dbReference>
<dbReference type="InterPro" id="IPR035977">
    <property type="entry name" value="Ribosomal_bL36_sp"/>
</dbReference>
<dbReference type="NCBIfam" id="TIGR01022">
    <property type="entry name" value="rpmJ_bact"/>
    <property type="match status" value="1"/>
</dbReference>
<dbReference type="PANTHER" id="PTHR42888">
    <property type="entry name" value="50S RIBOSOMAL PROTEIN L36, CHLOROPLASTIC"/>
    <property type="match status" value="1"/>
</dbReference>
<dbReference type="PANTHER" id="PTHR42888:SF1">
    <property type="entry name" value="LARGE RIBOSOMAL SUBUNIT PROTEIN BL36C"/>
    <property type="match status" value="1"/>
</dbReference>
<dbReference type="Pfam" id="PF00444">
    <property type="entry name" value="Ribosomal_L36"/>
    <property type="match status" value="1"/>
</dbReference>
<dbReference type="SUPFAM" id="SSF57840">
    <property type="entry name" value="Ribosomal protein L36"/>
    <property type="match status" value="1"/>
</dbReference>
<dbReference type="PROSITE" id="PS00828">
    <property type="entry name" value="RIBOSOMAL_L36"/>
    <property type="match status" value="1"/>
</dbReference>
<protein>
    <recommendedName>
        <fullName evidence="1">Large ribosomal subunit protein bL36</fullName>
    </recommendedName>
    <alternativeName>
        <fullName evidence="2">50S ribosomal protein L36</fullName>
    </alternativeName>
</protein>
<name>RL36_HELPY</name>
<feature type="chain" id="PRO_0000126194" description="Large ribosomal subunit protein bL36">
    <location>
        <begin position="1"/>
        <end position="37"/>
    </location>
</feature>
<organism>
    <name type="scientific">Helicobacter pylori (strain ATCC 700392 / 26695)</name>
    <name type="common">Campylobacter pylori</name>
    <dbReference type="NCBI Taxonomy" id="85962"/>
    <lineage>
        <taxon>Bacteria</taxon>
        <taxon>Pseudomonadati</taxon>
        <taxon>Campylobacterota</taxon>
        <taxon>Epsilonproteobacteria</taxon>
        <taxon>Campylobacterales</taxon>
        <taxon>Helicobacteraceae</taxon>
        <taxon>Helicobacter</taxon>
    </lineage>
</organism>
<evidence type="ECO:0000255" key="1">
    <source>
        <dbReference type="HAMAP-Rule" id="MF_00251"/>
    </source>
</evidence>
<evidence type="ECO:0000305" key="2"/>